<comment type="function">
    <text>Involved in the transposition of the insertion sequence IS186.</text>
</comment>
<comment type="similarity">
    <text evidence="1">Belongs to the transposase 11 family.</text>
</comment>
<organism>
    <name type="scientific">Escherichia coli (strain K12)</name>
    <dbReference type="NCBI Taxonomy" id="83333"/>
    <lineage>
        <taxon>Bacteria</taxon>
        <taxon>Pseudomonadati</taxon>
        <taxon>Pseudomonadota</taxon>
        <taxon>Gammaproteobacteria</taxon>
        <taxon>Enterobacterales</taxon>
        <taxon>Enterobacteriaceae</taxon>
        <taxon>Escherichia</taxon>
    </lineage>
</organism>
<keyword id="KW-0233">DNA recombination</keyword>
<keyword id="KW-0238">DNA-binding</keyword>
<keyword id="KW-1185">Reference proteome</keyword>
<keyword id="KW-0814">Transposable element</keyword>
<keyword id="KW-0815">Transposition</keyword>
<evidence type="ECO:0000305" key="1"/>
<reference key="1">
    <citation type="journal article" date="1985" name="FEBS Lett.">
        <title>Structural analysis of a new GC-specific insertion element IS186.</title>
        <authorList>
            <person name="Chong P."/>
            <person name="Hui I."/>
            <person name="Loo T."/>
            <person name="Gillam S."/>
        </authorList>
    </citation>
    <scope>NUCLEOTIDE SEQUENCE [GENOMIC DNA]</scope>
</reference>
<reference key="2">
    <citation type="journal article" date="1985" name="J. Bacteriol.">
        <title>IS186: an Escherichia coli insertion element isolated from a cDNA library.</title>
        <authorList>
            <person name="Kothary R.K."/>
            <person name="Jones D."/>
            <person name="Candido E.P.M."/>
        </authorList>
    </citation>
    <scope>NUCLEOTIDE SEQUENCE [GENOMIC DNA]</scope>
</reference>
<reference key="3">
    <citation type="journal article" date="1992" name="Nucleic Acids Res.">
        <title>Systematic sequencing of the Escherichia coli genome: analysis of the 0-2.4 min region.</title>
        <authorList>
            <person name="Yura T."/>
            <person name="Mori H."/>
            <person name="Nagai H."/>
            <person name="Nagata T."/>
            <person name="Ishihama A."/>
            <person name="Fujita N."/>
            <person name="Isono K."/>
            <person name="Mizobuchi K."/>
            <person name="Nakata A."/>
        </authorList>
    </citation>
    <scope>NUCLEOTIDE SEQUENCE [LARGE SCALE GENOMIC DNA]</scope>
    <source>
        <strain>K12</strain>
    </source>
</reference>
<reference key="4">
    <citation type="journal article" date="1997" name="Science">
        <title>The complete genome sequence of Escherichia coli K-12.</title>
        <authorList>
            <person name="Blattner F.R."/>
            <person name="Plunkett G. III"/>
            <person name="Bloch C.A."/>
            <person name="Perna N.T."/>
            <person name="Burland V."/>
            <person name="Riley M."/>
            <person name="Collado-Vides J."/>
            <person name="Glasner J.D."/>
            <person name="Rode C.K."/>
            <person name="Mayhew G.F."/>
            <person name="Gregor J."/>
            <person name="Davis N.W."/>
            <person name="Kirkpatrick H.A."/>
            <person name="Goeden M.A."/>
            <person name="Rose D.J."/>
            <person name="Mau B."/>
            <person name="Shao Y."/>
        </authorList>
    </citation>
    <scope>NUCLEOTIDE SEQUENCE [LARGE SCALE GENOMIC DNA]</scope>
    <source>
        <strain>K12 / MG1655 / ATCC 47076</strain>
    </source>
</reference>
<reference key="5">
    <citation type="journal article" date="2006" name="Mol. Syst. Biol.">
        <title>Highly accurate genome sequences of Escherichia coli K-12 strains MG1655 and W3110.</title>
        <authorList>
            <person name="Hayashi K."/>
            <person name="Morooka N."/>
            <person name="Yamamoto Y."/>
            <person name="Fujita K."/>
            <person name="Isono K."/>
            <person name="Choi S."/>
            <person name="Ohtsubo E."/>
            <person name="Baba T."/>
            <person name="Wanner B.L."/>
            <person name="Mori H."/>
            <person name="Horiuchi T."/>
        </authorList>
    </citation>
    <scope>NUCLEOTIDE SEQUENCE [LARGE SCALE GENOMIC DNA]</scope>
    <source>
        <strain>K12 / W3110 / ATCC 27325 / DSM 5911</strain>
    </source>
</reference>
<sequence length="370" mass="40909">MNYSHDNWSAILAHIGKPEELDTSARNAGALTRRREIRDAATLLRLGLAYGPGGMSLREVTAWAQLHDVATLSDVALLKRLRNAADWFGILAAQTLAVRAAVTGCTSGKRLRLVDGTAISAPGGGSAEWRLHMGYDPHTCQFTDFELTDSRDAERLDRFAQTADEIRIADRGFGSRPECIRSLAFGEADYIVRVHWRGLRWLTAEGMRFDMMGFLRGLDCGKNGETTVMIGNSGNKKAGAPFPARLIAVSLPPEKALISKTRLLSENRRKGRVVQAETLEAAGHVLLLTSLPEDEYSAEQVADCYRLRWQIELAFKRLKSLLHLDALRAKEPELAKAWIFANLLAAFLIDDIIQPSLDFPPRSAGSEKKN</sequence>
<gene>
    <name type="primary">insL1</name>
    <name type="ordered locus">b0016</name>
    <name type="ordered locus">JW0015</name>
</gene>
<accession>P0CF91</accession>
<accession>P08409</accession>
<accession>P11307</accession>
<accession>P76952</accession>
<accession>P77426</accession>
<accession>Q2MCH6</accession>
<accession>Q47051</accession>
<feature type="chain" id="PRO_0000173294" description="Putative transposase InsL for insertion sequence element IS186A">
    <location>
        <begin position="1"/>
        <end position="370"/>
    </location>
</feature>
<feature type="sequence conflict" description="In Ref. 2; AAA25030." evidence="1" ref="2">
    <original>A</original>
    <variation>G</variation>
    <location>
        <position position="121"/>
    </location>
</feature>
<feature type="sequence conflict" description="In Ref. 2; AAA25030." evidence="1" ref="2">
    <original>S</original>
    <variation>T</variation>
    <location>
        <position position="126"/>
    </location>
</feature>
<feature type="sequence conflict" description="In Ref. 1; CAA26900." evidence="1" ref="1">
    <original>QPSLDFPPRSAGSEKKN</original>
    <variation>SHRWISPPEVPDPKRRT</variation>
    <location>
        <begin position="354"/>
        <end position="370"/>
    </location>
</feature>
<feature type="sequence conflict" description="In Ref. 2; AAA25030." evidence="1" ref="2">
    <original>QPSLDFPPRSAGSEKKN</original>
    <variation>SHRWISPPEVRIRKEEL</variation>
    <location>
        <begin position="354"/>
        <end position="370"/>
    </location>
</feature>
<name>INSL1_ECOLI</name>
<protein>
    <recommendedName>
        <fullName>Putative transposase InsL for insertion sequence element IS186A</fullName>
    </recommendedName>
</protein>
<proteinExistence type="inferred from homology"/>
<dbReference type="EMBL" id="X03123">
    <property type="protein sequence ID" value="CAA26900.1"/>
    <property type="molecule type" value="Genomic_DNA"/>
</dbReference>
<dbReference type="EMBL" id="M11300">
    <property type="protein sequence ID" value="AAA25030.1"/>
    <property type="molecule type" value="Genomic_DNA"/>
</dbReference>
<dbReference type="EMBL" id="U00096">
    <property type="protein sequence ID" value="AAC73127.1"/>
    <property type="molecule type" value="Genomic_DNA"/>
</dbReference>
<dbReference type="EMBL" id="AP009048">
    <property type="protein sequence ID" value="BAE76030.1"/>
    <property type="molecule type" value="Genomic_DNA"/>
</dbReference>
<dbReference type="PIR" id="G65013">
    <property type="entry name" value="QQEC47"/>
</dbReference>
<dbReference type="RefSeq" id="NP_414557.1">
    <property type="nucleotide sequence ID" value="NC_000913.3"/>
</dbReference>
<dbReference type="RefSeq" id="WP_001300563.1">
    <property type="nucleotide sequence ID" value="NZ_STEB01000093.1"/>
</dbReference>
<dbReference type="FunCoup" id="P0CF91">
    <property type="interactions" value="33"/>
</dbReference>
<dbReference type="STRING" id="511145.b0016"/>
<dbReference type="PaxDb" id="511145-b0016"/>
<dbReference type="EnsemblBacteria" id="AAC73127">
    <property type="protein sequence ID" value="AAC73127"/>
    <property type="gene ID" value="b0016"/>
</dbReference>
<dbReference type="GeneID" id="944754"/>
<dbReference type="KEGG" id="ecj:JW0015"/>
<dbReference type="KEGG" id="eco:b0016"/>
<dbReference type="KEGG" id="eco:b0582"/>
<dbReference type="KEGG" id="eco:b2394"/>
<dbReference type="KEGG" id="ecoc:C3026_00080"/>
<dbReference type="KEGG" id="ecoc:C3026_02900"/>
<dbReference type="KEGG" id="ecoc:C3026_13305"/>
<dbReference type="EchoBASE" id="EB4748"/>
<dbReference type="eggNOG" id="COG3385">
    <property type="taxonomic scope" value="Bacteria"/>
</dbReference>
<dbReference type="HOGENOM" id="CLU_049434_1_0_6"/>
<dbReference type="InParanoid" id="P0CF91"/>
<dbReference type="OMA" id="IVRVYWR"/>
<dbReference type="OrthoDB" id="5889367at2"/>
<dbReference type="BioCyc" id="EcoCyc:G6083-MONOMER"/>
<dbReference type="PRO" id="PR:P0CF91"/>
<dbReference type="Proteomes" id="UP000000625">
    <property type="component" value="Chromosome"/>
</dbReference>
<dbReference type="GO" id="GO:0003677">
    <property type="term" value="F:DNA binding"/>
    <property type="evidence" value="ECO:0007669"/>
    <property type="project" value="UniProtKB-KW"/>
</dbReference>
<dbReference type="GO" id="GO:0004803">
    <property type="term" value="F:transposase activity"/>
    <property type="evidence" value="ECO:0007669"/>
    <property type="project" value="InterPro"/>
</dbReference>
<dbReference type="GO" id="GO:0006313">
    <property type="term" value="P:DNA transposition"/>
    <property type="evidence" value="ECO:0007669"/>
    <property type="project" value="InterPro"/>
</dbReference>
<dbReference type="Gene3D" id="3.90.350.10">
    <property type="entry name" value="Transposase Inhibitor Protein From Tn5, Chain A, domain 1"/>
    <property type="match status" value="1"/>
</dbReference>
<dbReference type="InterPro" id="IPR012337">
    <property type="entry name" value="RNaseH-like_sf"/>
</dbReference>
<dbReference type="InterPro" id="IPR047952">
    <property type="entry name" value="Transpos_IS4"/>
</dbReference>
<dbReference type="InterPro" id="IPR002559">
    <property type="entry name" value="Transposase_11"/>
</dbReference>
<dbReference type="NCBIfam" id="NF033592">
    <property type="entry name" value="transpos_IS4_1"/>
    <property type="match status" value="1"/>
</dbReference>
<dbReference type="PANTHER" id="PTHR33258">
    <property type="entry name" value="TRANSPOSASE INSL FOR INSERTION SEQUENCE ELEMENT IS186A-RELATED"/>
    <property type="match status" value="1"/>
</dbReference>
<dbReference type="PANTHER" id="PTHR33258:SF1">
    <property type="entry name" value="TRANSPOSASE INSL FOR INSERTION SEQUENCE ELEMENT IS186A-RELATED"/>
    <property type="match status" value="1"/>
</dbReference>
<dbReference type="Pfam" id="PF01609">
    <property type="entry name" value="DDE_Tnp_1"/>
    <property type="match status" value="1"/>
</dbReference>
<dbReference type="SUPFAM" id="SSF53098">
    <property type="entry name" value="Ribonuclease H-like"/>
    <property type="match status" value="1"/>
</dbReference>